<dbReference type="EC" id="3.6.4.13"/>
<dbReference type="EMBL" id="CM003157">
    <property type="protein sequence ID" value="KIS66488.1"/>
    <property type="molecule type" value="Genomic_DNA"/>
</dbReference>
<dbReference type="RefSeq" id="XP_011391815.1">
    <property type="nucleotide sequence ID" value="XM_011393513.1"/>
</dbReference>
<dbReference type="SMR" id="Q4P331"/>
<dbReference type="FunCoup" id="Q4P331">
    <property type="interactions" value="409"/>
</dbReference>
<dbReference type="STRING" id="237631.Q4P331"/>
<dbReference type="EnsemblFungi" id="KIS66488">
    <property type="protein sequence ID" value="KIS66488"/>
    <property type="gene ID" value="UMAG_05482"/>
</dbReference>
<dbReference type="GeneID" id="23565364"/>
<dbReference type="KEGG" id="uma:UMAG_05482"/>
<dbReference type="VEuPathDB" id="FungiDB:UMAG_05482"/>
<dbReference type="eggNOG" id="KOG0327">
    <property type="taxonomic scope" value="Eukaryota"/>
</dbReference>
<dbReference type="HOGENOM" id="CLU_003041_1_0_1"/>
<dbReference type="InParanoid" id="Q4P331"/>
<dbReference type="OMA" id="FGCQALV"/>
<dbReference type="OrthoDB" id="10265785at2759"/>
<dbReference type="Proteomes" id="UP000000561">
    <property type="component" value="Chromosome 18"/>
</dbReference>
<dbReference type="GO" id="GO:0010494">
    <property type="term" value="C:cytoplasmic stress granule"/>
    <property type="evidence" value="ECO:0000318"/>
    <property type="project" value="GO_Central"/>
</dbReference>
<dbReference type="GO" id="GO:0005524">
    <property type="term" value="F:ATP binding"/>
    <property type="evidence" value="ECO:0007669"/>
    <property type="project" value="UniProtKB-KW"/>
</dbReference>
<dbReference type="GO" id="GO:0016887">
    <property type="term" value="F:ATP hydrolysis activity"/>
    <property type="evidence" value="ECO:0007669"/>
    <property type="project" value="RHEA"/>
</dbReference>
<dbReference type="GO" id="GO:0003723">
    <property type="term" value="F:RNA binding"/>
    <property type="evidence" value="ECO:0007669"/>
    <property type="project" value="UniProtKB-KW"/>
</dbReference>
<dbReference type="GO" id="GO:0003724">
    <property type="term" value="F:RNA helicase activity"/>
    <property type="evidence" value="ECO:0007669"/>
    <property type="project" value="UniProtKB-EC"/>
</dbReference>
<dbReference type="GO" id="GO:0003743">
    <property type="term" value="F:translation initiation factor activity"/>
    <property type="evidence" value="ECO:0000318"/>
    <property type="project" value="GO_Central"/>
</dbReference>
<dbReference type="GO" id="GO:0002183">
    <property type="term" value="P:cytoplasmic translational initiation"/>
    <property type="evidence" value="ECO:0000318"/>
    <property type="project" value="GO_Central"/>
</dbReference>
<dbReference type="CDD" id="cd18046">
    <property type="entry name" value="DEADc_EIF4AII_EIF4AI_DDX2"/>
    <property type="match status" value="1"/>
</dbReference>
<dbReference type="CDD" id="cd18787">
    <property type="entry name" value="SF2_C_DEAD"/>
    <property type="match status" value="1"/>
</dbReference>
<dbReference type="FunFam" id="3.40.50.300:FF:000089">
    <property type="entry name" value="Eukaryotic initiation factor 4A-II"/>
    <property type="match status" value="1"/>
</dbReference>
<dbReference type="FunFam" id="3.40.50.300:FF:000031">
    <property type="entry name" value="Eukaryotic initiation factor 4A-III"/>
    <property type="match status" value="1"/>
</dbReference>
<dbReference type="Gene3D" id="3.40.50.300">
    <property type="entry name" value="P-loop containing nucleotide triphosphate hydrolases"/>
    <property type="match status" value="2"/>
</dbReference>
<dbReference type="InterPro" id="IPR011545">
    <property type="entry name" value="DEAD/DEAH_box_helicase_dom"/>
</dbReference>
<dbReference type="InterPro" id="IPR044728">
    <property type="entry name" value="EIF4A_DEADc"/>
</dbReference>
<dbReference type="InterPro" id="IPR014001">
    <property type="entry name" value="Helicase_ATP-bd"/>
</dbReference>
<dbReference type="InterPro" id="IPR001650">
    <property type="entry name" value="Helicase_C-like"/>
</dbReference>
<dbReference type="InterPro" id="IPR027417">
    <property type="entry name" value="P-loop_NTPase"/>
</dbReference>
<dbReference type="InterPro" id="IPR014014">
    <property type="entry name" value="RNA_helicase_DEAD_Q_motif"/>
</dbReference>
<dbReference type="PANTHER" id="PTHR47958">
    <property type="entry name" value="ATP-DEPENDENT RNA HELICASE DBP3"/>
    <property type="match status" value="1"/>
</dbReference>
<dbReference type="Pfam" id="PF00270">
    <property type="entry name" value="DEAD"/>
    <property type="match status" value="1"/>
</dbReference>
<dbReference type="Pfam" id="PF00271">
    <property type="entry name" value="Helicase_C"/>
    <property type="match status" value="1"/>
</dbReference>
<dbReference type="SMART" id="SM00487">
    <property type="entry name" value="DEXDc"/>
    <property type="match status" value="1"/>
</dbReference>
<dbReference type="SMART" id="SM00490">
    <property type="entry name" value="HELICc"/>
    <property type="match status" value="1"/>
</dbReference>
<dbReference type="SUPFAM" id="SSF52540">
    <property type="entry name" value="P-loop containing nucleoside triphosphate hydrolases"/>
    <property type="match status" value="2"/>
</dbReference>
<dbReference type="PROSITE" id="PS51192">
    <property type="entry name" value="HELICASE_ATP_BIND_1"/>
    <property type="match status" value="1"/>
</dbReference>
<dbReference type="PROSITE" id="PS51194">
    <property type="entry name" value="HELICASE_CTER"/>
    <property type="match status" value="1"/>
</dbReference>
<dbReference type="PROSITE" id="PS51195">
    <property type="entry name" value="Q_MOTIF"/>
    <property type="match status" value="1"/>
</dbReference>
<feature type="chain" id="PRO_0000232139" description="ATP-dependent RNA helicase eIF4A">
    <location>
        <begin position="1"/>
        <end position="411"/>
    </location>
</feature>
<feature type="domain" description="Helicase ATP-binding" evidence="2">
    <location>
        <begin position="69"/>
        <end position="239"/>
    </location>
</feature>
<feature type="domain" description="Helicase C-terminal" evidence="3">
    <location>
        <begin position="250"/>
        <end position="411"/>
    </location>
</feature>
<feature type="region of interest" description="Disordered" evidence="4">
    <location>
        <begin position="1"/>
        <end position="23"/>
    </location>
</feature>
<feature type="short sequence motif" description="Q motif">
    <location>
        <begin position="38"/>
        <end position="66"/>
    </location>
</feature>
<feature type="short sequence motif" description="DEAD box">
    <location>
        <begin position="187"/>
        <end position="190"/>
    </location>
</feature>
<feature type="compositionally biased region" description="Low complexity" evidence="4">
    <location>
        <begin position="9"/>
        <end position="19"/>
    </location>
</feature>
<feature type="binding site" evidence="2">
    <location>
        <begin position="82"/>
        <end position="89"/>
    </location>
    <ligand>
        <name>ATP</name>
        <dbReference type="ChEBI" id="CHEBI:30616"/>
    </ligand>
</feature>
<reference key="1">
    <citation type="journal article" date="2006" name="Nature">
        <title>Insights from the genome of the biotrophic fungal plant pathogen Ustilago maydis.</title>
        <authorList>
            <person name="Kaemper J."/>
            <person name="Kahmann R."/>
            <person name="Boelker M."/>
            <person name="Ma L.-J."/>
            <person name="Brefort T."/>
            <person name="Saville B.J."/>
            <person name="Banuett F."/>
            <person name="Kronstad J.W."/>
            <person name="Gold S.E."/>
            <person name="Mueller O."/>
            <person name="Perlin M.H."/>
            <person name="Woesten H.A.B."/>
            <person name="de Vries R."/>
            <person name="Ruiz-Herrera J."/>
            <person name="Reynaga-Pena C.G."/>
            <person name="Snetselaar K."/>
            <person name="McCann M."/>
            <person name="Perez-Martin J."/>
            <person name="Feldbruegge M."/>
            <person name="Basse C.W."/>
            <person name="Steinberg G."/>
            <person name="Ibeas J.I."/>
            <person name="Holloman W."/>
            <person name="Guzman P."/>
            <person name="Farman M.L."/>
            <person name="Stajich J.E."/>
            <person name="Sentandreu R."/>
            <person name="Gonzalez-Prieto J.M."/>
            <person name="Kennell J.C."/>
            <person name="Molina L."/>
            <person name="Schirawski J."/>
            <person name="Mendoza-Mendoza A."/>
            <person name="Greilinger D."/>
            <person name="Muench K."/>
            <person name="Roessel N."/>
            <person name="Scherer M."/>
            <person name="Vranes M."/>
            <person name="Ladendorf O."/>
            <person name="Vincon V."/>
            <person name="Fuchs U."/>
            <person name="Sandrock B."/>
            <person name="Meng S."/>
            <person name="Ho E.C.H."/>
            <person name="Cahill M.J."/>
            <person name="Boyce K.J."/>
            <person name="Klose J."/>
            <person name="Klosterman S.J."/>
            <person name="Deelstra H.J."/>
            <person name="Ortiz-Castellanos L."/>
            <person name="Li W."/>
            <person name="Sanchez-Alonso P."/>
            <person name="Schreier P.H."/>
            <person name="Haeuser-Hahn I."/>
            <person name="Vaupel M."/>
            <person name="Koopmann E."/>
            <person name="Friedrich G."/>
            <person name="Voss H."/>
            <person name="Schlueter T."/>
            <person name="Margolis J."/>
            <person name="Platt D."/>
            <person name="Swimmer C."/>
            <person name="Gnirke A."/>
            <person name="Chen F."/>
            <person name="Vysotskaia V."/>
            <person name="Mannhaupt G."/>
            <person name="Gueldener U."/>
            <person name="Muensterkoetter M."/>
            <person name="Haase D."/>
            <person name="Oesterheld M."/>
            <person name="Mewes H.-W."/>
            <person name="Mauceli E.W."/>
            <person name="DeCaprio D."/>
            <person name="Wade C.M."/>
            <person name="Butler J."/>
            <person name="Young S.K."/>
            <person name="Jaffe D.B."/>
            <person name="Calvo S.E."/>
            <person name="Nusbaum C."/>
            <person name="Galagan J.E."/>
            <person name="Birren B.W."/>
        </authorList>
    </citation>
    <scope>NUCLEOTIDE SEQUENCE [LARGE SCALE GENOMIC DNA]</scope>
    <source>
        <strain>DSM 14603 / FGSC 9021 / UM521</strain>
    </source>
</reference>
<reference key="2">
    <citation type="submission" date="2014-09" db="EMBL/GenBank/DDBJ databases">
        <authorList>
            <person name="Gueldener U."/>
            <person name="Muensterkoetter M."/>
            <person name="Walter M.C."/>
            <person name="Mannhaupt G."/>
            <person name="Kahmann R."/>
        </authorList>
    </citation>
    <scope>GENOME REANNOTATION</scope>
    <source>
        <strain>DSM 14603 / FGSC 9021 / UM521</strain>
    </source>
</reference>
<keyword id="KW-0067">ATP-binding</keyword>
<keyword id="KW-0963">Cytoplasm</keyword>
<keyword id="KW-0347">Helicase</keyword>
<keyword id="KW-0378">Hydrolase</keyword>
<keyword id="KW-0396">Initiation factor</keyword>
<keyword id="KW-0547">Nucleotide-binding</keyword>
<keyword id="KW-0648">Protein biosynthesis</keyword>
<keyword id="KW-1185">Reference proteome</keyword>
<keyword id="KW-0694">RNA-binding</keyword>
<protein>
    <recommendedName>
        <fullName>ATP-dependent RNA helicase eIF4A</fullName>
        <ecNumber>3.6.4.13</ecNumber>
    </recommendedName>
    <alternativeName>
        <fullName>Eukaryotic initiation factor 4A</fullName>
        <shortName>eIF-4A</shortName>
    </alternativeName>
    <alternativeName>
        <fullName>Translation initiation factor 1</fullName>
    </alternativeName>
</protein>
<gene>
    <name type="primary">TIF1</name>
    <name type="synonym">TIF41</name>
    <name type="ORF">UMAG_05482</name>
</gene>
<sequence>MSKPEDTSAAAAAPAGEAGNNLNIADGEIESNWETVIDNFDNMELKEELLRGVYAYGFERPSAIQARAIVPVIKGHDVIAQAQSGTGKTATFSIAILQRIDPSIKAVQALILAPTRELAQQIQKVVIALGDYMKIDCHACIGGTNVREDMAKLNEGAQVVVGTPGRVYDMINRRAFKTDQLKMFCLDEADEMLSRGFKDQMYEVFQLLPQDTQCVLLSATMPQEVLEVTKKFMRDPIRILVKRDELTLEGIKQFYVAVEKEDWKLDTLCDLYETVTITQAVIFCNTRRKVDWLTDKLTSREFTVSAMHGDMEQAQREVIMREFRSGSSRVLITTDLLARGIDVQQVSLVINYDLPSNRENYIHRIGRGGRFGRKGVAINFVTSDDVRMLRDIEQFYSTQIDEMPLNVADLI</sequence>
<accession>Q4P331</accession>
<accession>A0A0D1CHQ2</accession>
<comment type="function">
    <text evidence="1">ATP-dependent RNA helicase which is a subunit of the eIF4F complex involved in cap recognition and is required for mRNA binding to ribosome. In the current model of translation initiation, eIF4A unwinds RNA secondary structures in the 5'-UTR of mRNAs which is necessary to allow efficient binding of the small ribosomal subunit, and subsequent scanning for the initiator codon (By similarity).</text>
</comment>
<comment type="catalytic activity">
    <reaction>
        <text>ATP + H2O = ADP + phosphate + H(+)</text>
        <dbReference type="Rhea" id="RHEA:13065"/>
        <dbReference type="ChEBI" id="CHEBI:15377"/>
        <dbReference type="ChEBI" id="CHEBI:15378"/>
        <dbReference type="ChEBI" id="CHEBI:30616"/>
        <dbReference type="ChEBI" id="CHEBI:43474"/>
        <dbReference type="ChEBI" id="CHEBI:456216"/>
        <dbReference type="EC" id="3.6.4.13"/>
    </reaction>
</comment>
<comment type="subunit">
    <text evidence="1">Component of the eIF4F complex, which composition varies with external and internal environmental conditions. It is composed of at least eIF4A, eIF4E and eIF4G (By similarity).</text>
</comment>
<comment type="subcellular location">
    <subcellularLocation>
        <location evidence="1">Cytoplasm</location>
    </subcellularLocation>
</comment>
<comment type="domain">
    <text>The Q motif is unique to and characteristic of the DEAD box family of RNA helicases and controls ATP binding and hydrolysis.</text>
</comment>
<comment type="similarity">
    <text evidence="5">Belongs to the DEAD box helicase family. eIF4A subfamily.</text>
</comment>
<evidence type="ECO:0000250" key="1"/>
<evidence type="ECO:0000255" key="2">
    <source>
        <dbReference type="PROSITE-ProRule" id="PRU00541"/>
    </source>
</evidence>
<evidence type="ECO:0000255" key="3">
    <source>
        <dbReference type="PROSITE-ProRule" id="PRU00542"/>
    </source>
</evidence>
<evidence type="ECO:0000256" key="4">
    <source>
        <dbReference type="SAM" id="MobiDB-lite"/>
    </source>
</evidence>
<evidence type="ECO:0000305" key="5"/>
<name>IF4A_MYCMD</name>
<proteinExistence type="inferred from homology"/>
<organism>
    <name type="scientific">Mycosarcoma maydis</name>
    <name type="common">Corn smut fungus</name>
    <name type="synonym">Ustilago maydis</name>
    <dbReference type="NCBI Taxonomy" id="5270"/>
    <lineage>
        <taxon>Eukaryota</taxon>
        <taxon>Fungi</taxon>
        <taxon>Dikarya</taxon>
        <taxon>Basidiomycota</taxon>
        <taxon>Ustilaginomycotina</taxon>
        <taxon>Ustilaginomycetes</taxon>
        <taxon>Ustilaginales</taxon>
        <taxon>Ustilaginaceae</taxon>
        <taxon>Mycosarcoma</taxon>
    </lineage>
</organism>